<sequence length="251" mass="29735">MFGLQHIWDCILQYEAQLRSPFFPVLFSITVYLSFCLPFVLLDALSPKVELIRRYKIQQKASVSWTMMWSCLALSLYNHVVYIFPLSVLHWYWRPVSYLAEAPGVLRVVWDLAACLLLFDFQYFVWHLLHHKVPWLYRTFHKVHHKYTSTFALATEYSGAWETLSLGFFAAVNPMLLGVHPMTEMLFHMLNMWLSVEDHCGYDLPWATHRLMPFGLYGGAPHHDVHHQKFKSNYAPYFTHWDKLFGTLHFE</sequence>
<evidence type="ECO:0000250" key="1">
    <source>
        <dbReference type="UniProtKB" id="Q9Z0F5"/>
    </source>
</evidence>
<evidence type="ECO:0000255" key="2"/>
<evidence type="ECO:0000305" key="3"/>
<name>CH25H_DANRE</name>
<protein>
    <recommendedName>
        <fullName>Cholesterol 25-hydroxylase-like protein</fullName>
        <ecNumber evidence="1">1.14.99.38</ecNumber>
    </recommendedName>
</protein>
<organism>
    <name type="scientific">Danio rerio</name>
    <name type="common">Zebrafish</name>
    <name type="synonym">Brachydanio rerio</name>
    <dbReference type="NCBI Taxonomy" id="7955"/>
    <lineage>
        <taxon>Eukaryota</taxon>
        <taxon>Metazoa</taxon>
        <taxon>Chordata</taxon>
        <taxon>Craniata</taxon>
        <taxon>Vertebrata</taxon>
        <taxon>Euteleostomi</taxon>
        <taxon>Actinopterygii</taxon>
        <taxon>Neopterygii</taxon>
        <taxon>Teleostei</taxon>
        <taxon>Ostariophysi</taxon>
        <taxon>Cypriniformes</taxon>
        <taxon>Danionidae</taxon>
        <taxon>Danioninae</taxon>
        <taxon>Danio</taxon>
    </lineage>
</organism>
<accession>Q5PRC0</accession>
<feature type="chain" id="PRO_0000226805" description="Cholesterol 25-hydroxylase-like protein">
    <location>
        <begin position="1"/>
        <end position="251"/>
    </location>
</feature>
<feature type="transmembrane region" description="Helical" evidence="2">
    <location>
        <begin position="22"/>
        <end position="42"/>
    </location>
</feature>
<feature type="transmembrane region" description="Helical" evidence="2">
    <location>
        <begin position="69"/>
        <end position="89"/>
    </location>
</feature>
<feature type="transmembrane region" description="Helical" evidence="2">
    <location>
        <begin position="108"/>
        <end position="128"/>
    </location>
</feature>
<feature type="domain" description="Fatty acid hydroxylase" evidence="2">
    <location>
        <begin position="113"/>
        <end position="247"/>
    </location>
</feature>
<feature type="short sequence motif" description="Histidine box-1">
    <location>
        <begin position="126"/>
        <end position="130"/>
    </location>
</feature>
<feature type="short sequence motif" description="Histidine box-2">
    <location>
        <begin position="141"/>
        <end position="145"/>
    </location>
</feature>
<feature type="short sequence motif" description="Histidine box-3">
    <location>
        <begin position="222"/>
        <end position="228"/>
    </location>
</feature>
<proteinExistence type="evidence at transcript level"/>
<gene>
    <name type="primary">ch25h</name>
    <name type="ORF">zgc:101688</name>
</gene>
<comment type="function">
    <text evidence="1">Catalyzes the formation of 25-hydroxycholesterol from cholesterol, leading to repress cholesterol biosynthetic enzymes. Plays a key role in cell positioning and movement in lymphoid tissues: 25-hydroxycholesterol is an intermediate in biosynthesis of 7-alpha,25-dihydroxycholesterol (7-alpha,25-OHC), an oxysterol that acts as a ligand for the G protein-coupled receptor GPR183/EBI2, a chemotactic receptor for a number of lymphoid cells. May play an important role in regulating lipid metabolism by synthesizing a corepressor that blocks sterol regulatory element binding protein (SREBP) processing. In testis, production of 25-hydroxycholesterol by macrophages may play a role in Leydig cell differentiation.</text>
</comment>
<comment type="catalytic activity">
    <reaction evidence="1">
        <text>cholesterol + AH2 + O2 = 25-hydroxycholesterol + A + H2O</text>
        <dbReference type="Rhea" id="RHEA:21104"/>
        <dbReference type="ChEBI" id="CHEBI:13193"/>
        <dbReference type="ChEBI" id="CHEBI:15377"/>
        <dbReference type="ChEBI" id="CHEBI:15379"/>
        <dbReference type="ChEBI" id="CHEBI:16113"/>
        <dbReference type="ChEBI" id="CHEBI:17499"/>
        <dbReference type="ChEBI" id="CHEBI:42977"/>
        <dbReference type="EC" id="1.14.99.38"/>
    </reaction>
    <physiologicalReaction direction="left-to-right" evidence="1">
        <dbReference type="Rhea" id="RHEA:21105"/>
    </physiologicalReaction>
</comment>
<comment type="catalytic activity">
    <reaction evidence="1">
        <text>cholesterol + NADPH + O2 + H(+) = 25-hydroxycholesterol + NADP(+) + H2O</text>
        <dbReference type="Rhea" id="RHEA:46132"/>
        <dbReference type="ChEBI" id="CHEBI:15377"/>
        <dbReference type="ChEBI" id="CHEBI:15378"/>
        <dbReference type="ChEBI" id="CHEBI:15379"/>
        <dbReference type="ChEBI" id="CHEBI:16113"/>
        <dbReference type="ChEBI" id="CHEBI:42977"/>
        <dbReference type="ChEBI" id="CHEBI:57783"/>
        <dbReference type="ChEBI" id="CHEBI:58349"/>
    </reaction>
    <physiologicalReaction direction="left-to-right" evidence="1">
        <dbReference type="Rhea" id="RHEA:46133"/>
    </physiologicalReaction>
</comment>
<comment type="cofactor">
    <cofactor evidence="1">
        <name>Fe cation</name>
        <dbReference type="ChEBI" id="CHEBI:24875"/>
    </cofactor>
</comment>
<comment type="subcellular location">
    <subcellularLocation>
        <location evidence="1">Endoplasmic reticulum membrane</location>
        <topology evidence="1">Multi-pass membrane protein</topology>
    </subcellularLocation>
</comment>
<comment type="similarity">
    <text evidence="3">Belongs to the sterol desaturase family.</text>
</comment>
<reference key="1">
    <citation type="submission" date="2004-12" db="EMBL/GenBank/DDBJ databases">
        <authorList>
            <consortium name="NIH - Zebrafish Gene Collection (ZGC) project"/>
        </authorList>
    </citation>
    <scope>NUCLEOTIDE SEQUENCE [LARGE SCALE MRNA]</scope>
    <source>
        <tissue>Olfactory epithelium</tissue>
    </source>
</reference>
<keyword id="KW-0256">Endoplasmic reticulum</keyword>
<keyword id="KW-0408">Iron</keyword>
<keyword id="KW-0444">Lipid biosynthesis</keyword>
<keyword id="KW-0443">Lipid metabolism</keyword>
<keyword id="KW-0472">Membrane</keyword>
<keyword id="KW-0479">Metal-binding</keyword>
<keyword id="KW-0503">Monooxygenase</keyword>
<keyword id="KW-0560">Oxidoreductase</keyword>
<keyword id="KW-1185">Reference proteome</keyword>
<keyword id="KW-0752">Steroid biosynthesis</keyword>
<keyword id="KW-0753">Steroid metabolism</keyword>
<keyword id="KW-0756">Sterol biosynthesis</keyword>
<keyword id="KW-1207">Sterol metabolism</keyword>
<keyword id="KW-0812">Transmembrane</keyword>
<keyword id="KW-1133">Transmembrane helix</keyword>
<dbReference type="EC" id="1.14.99.38" evidence="1"/>
<dbReference type="EMBL" id="BC086721">
    <property type="protein sequence ID" value="AAH86721.1"/>
    <property type="molecule type" value="mRNA"/>
</dbReference>
<dbReference type="RefSeq" id="NP_001008652.1">
    <property type="nucleotide sequence ID" value="NM_001008652.1"/>
</dbReference>
<dbReference type="FunCoup" id="Q5PRC0">
    <property type="interactions" value="3"/>
</dbReference>
<dbReference type="STRING" id="7955.ENSDARP00000066438"/>
<dbReference type="PaxDb" id="7955-ENSDARP00000066438"/>
<dbReference type="Ensembl" id="ENSDART00000066439">
    <property type="protein sequence ID" value="ENSDARP00000066438"/>
    <property type="gene ID" value="ENSDARG00000045190"/>
</dbReference>
<dbReference type="GeneID" id="494109"/>
<dbReference type="KEGG" id="dre:494109"/>
<dbReference type="AGR" id="ZFIN:ZDB-GENE-041212-81"/>
<dbReference type="CTD" id="9023"/>
<dbReference type="ZFIN" id="ZDB-GENE-041212-81">
    <property type="gene designation" value="ch25h"/>
</dbReference>
<dbReference type="eggNOG" id="KOG0873">
    <property type="taxonomic scope" value="Eukaryota"/>
</dbReference>
<dbReference type="HOGENOM" id="CLU_047036_5_1_1"/>
<dbReference type="InParanoid" id="Q5PRC0"/>
<dbReference type="OMA" id="VPWLYKT"/>
<dbReference type="OrthoDB" id="1658724at2759"/>
<dbReference type="PhylomeDB" id="Q5PRC0"/>
<dbReference type="TreeFam" id="TF314256"/>
<dbReference type="Reactome" id="R-DRE-192105">
    <property type="pathway name" value="Synthesis of bile acids and bile salts"/>
</dbReference>
<dbReference type="PRO" id="PR:Q5PRC0"/>
<dbReference type="Proteomes" id="UP000000437">
    <property type="component" value="Chromosome 12"/>
</dbReference>
<dbReference type="Bgee" id="ENSDARG00000045190">
    <property type="expression patterns" value="Expressed in spleen and 14 other cell types or tissues"/>
</dbReference>
<dbReference type="ExpressionAtlas" id="Q5PRC0">
    <property type="expression patterns" value="differential"/>
</dbReference>
<dbReference type="GO" id="GO:0005789">
    <property type="term" value="C:endoplasmic reticulum membrane"/>
    <property type="evidence" value="ECO:0000318"/>
    <property type="project" value="GO_Central"/>
</dbReference>
<dbReference type="GO" id="GO:0000254">
    <property type="term" value="F:C-4 methylsterol oxidase activity"/>
    <property type="evidence" value="ECO:0000318"/>
    <property type="project" value="GO_Central"/>
</dbReference>
<dbReference type="GO" id="GO:0001567">
    <property type="term" value="F:cholesterol 25-hydroxylase activity"/>
    <property type="evidence" value="ECO:0000250"/>
    <property type="project" value="UniProtKB"/>
</dbReference>
<dbReference type="GO" id="GO:0005506">
    <property type="term" value="F:iron ion binding"/>
    <property type="evidence" value="ECO:0007669"/>
    <property type="project" value="InterPro"/>
</dbReference>
<dbReference type="GO" id="GO:0008395">
    <property type="term" value="F:steroid hydroxylase activity"/>
    <property type="evidence" value="ECO:0000318"/>
    <property type="project" value="GO_Central"/>
</dbReference>
<dbReference type="GO" id="GO:0035754">
    <property type="term" value="P:B cell chemotaxis"/>
    <property type="evidence" value="ECO:0000250"/>
    <property type="project" value="UniProtKB"/>
</dbReference>
<dbReference type="GO" id="GO:0008203">
    <property type="term" value="P:cholesterol metabolic process"/>
    <property type="evidence" value="ECO:0000318"/>
    <property type="project" value="GO_Central"/>
</dbReference>
<dbReference type="GO" id="GO:0051607">
    <property type="term" value="P:defense response to virus"/>
    <property type="evidence" value="ECO:0000314"/>
    <property type="project" value="ZFIN"/>
</dbReference>
<dbReference type="GO" id="GO:0016126">
    <property type="term" value="P:sterol biosynthetic process"/>
    <property type="evidence" value="ECO:0000318"/>
    <property type="project" value="GO_Central"/>
</dbReference>
<dbReference type="InterPro" id="IPR006694">
    <property type="entry name" value="Fatty_acid_hydroxylase"/>
</dbReference>
<dbReference type="InterPro" id="IPR050307">
    <property type="entry name" value="Sterol_Desaturase_Related"/>
</dbReference>
<dbReference type="PANTHER" id="PTHR11863">
    <property type="entry name" value="STEROL DESATURASE"/>
    <property type="match status" value="1"/>
</dbReference>
<dbReference type="Pfam" id="PF04116">
    <property type="entry name" value="FA_hydroxylase"/>
    <property type="match status" value="1"/>
</dbReference>